<feature type="chain" id="PRO_0000170985" description="Molybdopterin adenylyltransferase">
    <location>
        <begin position="1"/>
        <end position="176"/>
    </location>
</feature>
<protein>
    <recommendedName>
        <fullName>Molybdopterin adenylyltransferase</fullName>
        <shortName>MPT adenylyltransferase</shortName>
        <ecNumber>2.7.7.75</ecNumber>
    </recommendedName>
</protein>
<keyword id="KW-0067">ATP-binding</keyword>
<keyword id="KW-0501">Molybdenum cofactor biosynthesis</keyword>
<keyword id="KW-0547">Nucleotide-binding</keyword>
<keyword id="KW-1185">Reference proteome</keyword>
<keyword id="KW-0808">Transferase</keyword>
<sequence>MQTIHIGVLSASDRASKGIYEDLSGKAIQEVLSEYLLNPLEFYYEIVADERDLIEKSLIKMCDEYQCDLVVTTGGTGPALRDITPEATEKVCQKMLPGFGELMRMTSLKYVPTAILSRQSAGIRNKSLIINLPGKPKSIRECLEAVFPAIPYCVDLILGNYMQVNEKNIQAFRPKQ</sequence>
<gene>
    <name type="primary">mog</name>
    <name type="synonym">mogA</name>
    <name type="ordered locus">HP_0799</name>
</gene>
<reference key="1">
    <citation type="journal article" date="1997" name="Nature">
        <title>The complete genome sequence of the gastric pathogen Helicobacter pylori.</title>
        <authorList>
            <person name="Tomb J.-F."/>
            <person name="White O."/>
            <person name="Kerlavage A.R."/>
            <person name="Clayton R.A."/>
            <person name="Sutton G.G."/>
            <person name="Fleischmann R.D."/>
            <person name="Ketchum K.A."/>
            <person name="Klenk H.-P."/>
            <person name="Gill S.R."/>
            <person name="Dougherty B.A."/>
            <person name="Nelson K.E."/>
            <person name="Quackenbush J."/>
            <person name="Zhou L."/>
            <person name="Kirkness E.F."/>
            <person name="Peterson S.N."/>
            <person name="Loftus B.J."/>
            <person name="Richardson D.L."/>
            <person name="Dodson R.J."/>
            <person name="Khalak H.G."/>
            <person name="Glodek A."/>
            <person name="McKenney K."/>
            <person name="FitzGerald L.M."/>
            <person name="Lee N."/>
            <person name="Adams M.D."/>
            <person name="Hickey E.K."/>
            <person name="Berg D.E."/>
            <person name="Gocayne J.D."/>
            <person name="Utterback T.R."/>
            <person name="Peterson J.D."/>
            <person name="Kelley J.M."/>
            <person name="Cotton M.D."/>
            <person name="Weidman J.F."/>
            <person name="Fujii C."/>
            <person name="Bowman C."/>
            <person name="Watthey L."/>
            <person name="Wallin E."/>
            <person name="Hayes W.S."/>
            <person name="Borodovsky M."/>
            <person name="Karp P.D."/>
            <person name="Smith H.O."/>
            <person name="Fraser C.M."/>
            <person name="Venter J.C."/>
        </authorList>
    </citation>
    <scope>NUCLEOTIDE SEQUENCE [LARGE SCALE GENOMIC DNA]</scope>
    <source>
        <strain>ATCC 700392 / 26695</strain>
    </source>
</reference>
<name>MOG_HELPY</name>
<evidence type="ECO:0000250" key="1"/>
<evidence type="ECO:0000305" key="2"/>
<comment type="function">
    <text evidence="1">Catalyzes the adenylation of molybdopterin as part of the biosynthesis of the molybdenum-cofactor.</text>
</comment>
<comment type="catalytic activity">
    <reaction>
        <text>molybdopterin + ATP + H(+) = adenylyl-molybdopterin + diphosphate</text>
        <dbReference type="Rhea" id="RHEA:31331"/>
        <dbReference type="ChEBI" id="CHEBI:15378"/>
        <dbReference type="ChEBI" id="CHEBI:30616"/>
        <dbReference type="ChEBI" id="CHEBI:33019"/>
        <dbReference type="ChEBI" id="CHEBI:58698"/>
        <dbReference type="ChEBI" id="CHEBI:62727"/>
        <dbReference type="EC" id="2.7.7.75"/>
    </reaction>
</comment>
<comment type="pathway">
    <text>Cofactor biosynthesis; molybdopterin biosynthesis.</text>
</comment>
<comment type="similarity">
    <text evidence="2">Belongs to the MoaB/Mog family.</text>
</comment>
<organism>
    <name type="scientific">Helicobacter pylori (strain ATCC 700392 / 26695)</name>
    <name type="common">Campylobacter pylori</name>
    <dbReference type="NCBI Taxonomy" id="85962"/>
    <lineage>
        <taxon>Bacteria</taxon>
        <taxon>Pseudomonadati</taxon>
        <taxon>Campylobacterota</taxon>
        <taxon>Epsilonproteobacteria</taxon>
        <taxon>Campylobacterales</taxon>
        <taxon>Helicobacteraceae</taxon>
        <taxon>Helicobacter</taxon>
    </lineage>
</organism>
<dbReference type="EC" id="2.7.7.75"/>
<dbReference type="EMBL" id="AE000511">
    <property type="protein sequence ID" value="AAD07849.1"/>
    <property type="molecule type" value="Genomic_DNA"/>
</dbReference>
<dbReference type="PIR" id="G64619">
    <property type="entry name" value="G64619"/>
</dbReference>
<dbReference type="RefSeq" id="NP_207592.1">
    <property type="nucleotide sequence ID" value="NC_000915.1"/>
</dbReference>
<dbReference type="RefSeq" id="WP_001193328.1">
    <property type="nucleotide sequence ID" value="NC_018939.1"/>
</dbReference>
<dbReference type="SMR" id="P56421"/>
<dbReference type="FunCoup" id="P56421">
    <property type="interactions" value="146"/>
</dbReference>
<dbReference type="IntAct" id="P56421">
    <property type="interactions" value="2"/>
</dbReference>
<dbReference type="STRING" id="85962.HP_0799"/>
<dbReference type="PaxDb" id="85962-C694_04095"/>
<dbReference type="EnsemblBacteria" id="AAD07849">
    <property type="protein sequence ID" value="AAD07849"/>
    <property type="gene ID" value="HP_0799"/>
</dbReference>
<dbReference type="KEGG" id="heo:C694_04095"/>
<dbReference type="KEGG" id="hpy:HP_0799"/>
<dbReference type="PATRIC" id="fig|85962.47.peg.851"/>
<dbReference type="eggNOG" id="COG0521">
    <property type="taxonomic scope" value="Bacteria"/>
</dbReference>
<dbReference type="InParanoid" id="P56421"/>
<dbReference type="OrthoDB" id="9784492at2"/>
<dbReference type="PhylomeDB" id="P56421"/>
<dbReference type="UniPathway" id="UPA00344"/>
<dbReference type="Proteomes" id="UP000000429">
    <property type="component" value="Chromosome"/>
</dbReference>
<dbReference type="GO" id="GO:0005829">
    <property type="term" value="C:cytosol"/>
    <property type="evidence" value="ECO:0000318"/>
    <property type="project" value="GO_Central"/>
</dbReference>
<dbReference type="GO" id="GO:0005524">
    <property type="term" value="F:ATP binding"/>
    <property type="evidence" value="ECO:0007669"/>
    <property type="project" value="UniProtKB-KW"/>
</dbReference>
<dbReference type="GO" id="GO:0061598">
    <property type="term" value="F:molybdopterin adenylyltransferase activity"/>
    <property type="evidence" value="ECO:0000318"/>
    <property type="project" value="GO_Central"/>
</dbReference>
<dbReference type="GO" id="GO:0006777">
    <property type="term" value="P:Mo-molybdopterin cofactor biosynthetic process"/>
    <property type="evidence" value="ECO:0007669"/>
    <property type="project" value="UniProtKB-KW"/>
</dbReference>
<dbReference type="GO" id="GO:0032324">
    <property type="term" value="P:molybdopterin cofactor biosynthetic process"/>
    <property type="evidence" value="ECO:0000318"/>
    <property type="project" value="GO_Central"/>
</dbReference>
<dbReference type="CDD" id="cd00886">
    <property type="entry name" value="MogA_MoaB"/>
    <property type="match status" value="1"/>
</dbReference>
<dbReference type="FunFam" id="3.40.980.10:FF:000005">
    <property type="entry name" value="Molybdopterin biosynthesis mog protein"/>
    <property type="match status" value="1"/>
</dbReference>
<dbReference type="Gene3D" id="3.40.980.10">
    <property type="entry name" value="MoaB/Mog-like domain"/>
    <property type="match status" value="1"/>
</dbReference>
<dbReference type="InterPro" id="IPR036425">
    <property type="entry name" value="MoaB/Mog-like_dom_sf"/>
</dbReference>
<dbReference type="InterPro" id="IPR001453">
    <property type="entry name" value="MoaB/Mog_dom"/>
</dbReference>
<dbReference type="InterPro" id="IPR008284">
    <property type="entry name" value="MoCF_biosynth_CS"/>
</dbReference>
<dbReference type="InterPro" id="IPR051920">
    <property type="entry name" value="MPT_Adenylyltrnsfr/MoaC-Rel"/>
</dbReference>
<dbReference type="NCBIfam" id="TIGR00177">
    <property type="entry name" value="molyb_syn"/>
    <property type="match status" value="1"/>
</dbReference>
<dbReference type="NCBIfam" id="NF006932">
    <property type="entry name" value="PRK09417.1"/>
    <property type="match status" value="1"/>
</dbReference>
<dbReference type="PANTHER" id="PTHR43764">
    <property type="entry name" value="MOLYBDENUM COFACTOR BIOSYNTHESIS"/>
    <property type="match status" value="1"/>
</dbReference>
<dbReference type="PANTHER" id="PTHR43764:SF1">
    <property type="entry name" value="MOLYBDOPTERIN MOLYBDOTRANSFERASE"/>
    <property type="match status" value="1"/>
</dbReference>
<dbReference type="Pfam" id="PF00994">
    <property type="entry name" value="MoCF_biosynth"/>
    <property type="match status" value="1"/>
</dbReference>
<dbReference type="SMART" id="SM00852">
    <property type="entry name" value="MoCF_biosynth"/>
    <property type="match status" value="1"/>
</dbReference>
<dbReference type="SUPFAM" id="SSF53218">
    <property type="entry name" value="Molybdenum cofactor biosynthesis proteins"/>
    <property type="match status" value="1"/>
</dbReference>
<dbReference type="PROSITE" id="PS01078">
    <property type="entry name" value="MOCF_BIOSYNTHESIS_1"/>
    <property type="match status" value="1"/>
</dbReference>
<accession>P56421</accession>
<proteinExistence type="inferred from homology"/>